<protein>
    <recommendedName>
        <fullName>Voltage-dependent calcium channel gamma-3 subunit</fullName>
    </recommendedName>
    <alternativeName>
        <fullName>Neuronal voltage-gated calcium channel gamma-3 subunit</fullName>
    </alternativeName>
    <alternativeName>
        <fullName>Transmembrane AMPAR regulatory protein gamma-3</fullName>
        <shortName>TARP gamma-3</shortName>
    </alternativeName>
</protein>
<evidence type="ECO:0000250" key="1">
    <source>
        <dbReference type="UniProtKB" id="Q8VHX0"/>
    </source>
</evidence>
<evidence type="ECO:0000255" key="2"/>
<evidence type="ECO:0000256" key="3">
    <source>
        <dbReference type="SAM" id="MobiDB-lite"/>
    </source>
</evidence>
<evidence type="ECO:0000269" key="4">
    <source>
    </source>
</evidence>
<evidence type="ECO:0000305" key="5"/>
<accession>Q9JJV5</accession>
<accession>A6H6R5</accession>
<feature type="chain" id="PRO_0000164676" description="Voltage-dependent calcium channel gamma-3 subunit">
    <location>
        <begin position="1"/>
        <end position="315"/>
    </location>
</feature>
<feature type="transmembrane region" description="Helical" evidence="2">
    <location>
        <begin position="8"/>
        <end position="28"/>
    </location>
</feature>
<feature type="transmembrane region" description="Helical" evidence="2">
    <location>
        <begin position="104"/>
        <end position="124"/>
    </location>
</feature>
<feature type="transmembrane region" description="Helical" evidence="2">
    <location>
        <begin position="135"/>
        <end position="155"/>
    </location>
</feature>
<feature type="transmembrane region" description="Helical" evidence="2">
    <location>
        <begin position="181"/>
        <end position="201"/>
    </location>
</feature>
<feature type="region of interest" description="Disordered" evidence="3">
    <location>
        <begin position="232"/>
        <end position="253"/>
    </location>
</feature>
<feature type="modified residue" description="Phosphoserine" evidence="1">
    <location>
        <position position="248"/>
    </location>
</feature>
<feature type="mutagenesis site" description="Decreased interaction with AP4M1. Has no effect on interaction with GRIA1. Dominant negative mutant which alters AMPARs localization to the somatodendritic compartment." evidence="4">
    <original>YRYRFRRRSSSRST</original>
    <variation>ARARARRRAAARAA</variation>
    <location>
        <begin position="227"/>
        <end position="240"/>
    </location>
</feature>
<feature type="sequence conflict" description="In Ref. 1; CAB86385." evidence="5" ref="1">
    <original>S</original>
    <variation>F</variation>
    <location>
        <position position="61"/>
    </location>
</feature>
<proteinExistence type="evidence at protein level"/>
<gene>
    <name type="primary">Cacng3</name>
</gene>
<comment type="function">
    <text evidence="1 4">Regulates the trafficking to the somatodendritic compartment and gating properties of AMPA-selective glutamate receptors (AMPARs) (PubMed:18341993). Promotes their targeting to the cell membrane and synapses and modulates their gating properties by slowing their rates of activation, deactivation and desensitization. Does not show subunit-specific AMPA receptor regulation and regulates all AMPAR subunits. Thought to stabilize the calcium channel in an inactivated (closed) state (By similarity).</text>
</comment>
<comment type="subunit">
    <text evidence="1 4">The L-type calcium channel is composed of five subunits: alpha-1, alpha-2/delta, beta and gamma. Acts as an auxiliary subunit for AMPA-selective glutamate receptors (AMPARs). Found in a complex with GRIA1, GRIA2, GRIA3, GRIA4, CNIH2, CNIH3, CACNG2, CACNG4, CACNG5, CACNG7 and CACNG8 (By similarity). Interacts with AP4M1 and GRIA1; associates GRIA1 with the adaptor protein complex 4 (AP-4) to target GRIA1 to the somatodendritic compartment of neurons (PubMed:18341993).</text>
</comment>
<comment type="subcellular location">
    <subcellularLocation>
        <location evidence="2">Membrane</location>
        <topology evidence="2">Multi-pass membrane protein</topology>
    </subcellularLocation>
    <text evidence="4">Displays a somatodendritic localization and is excluded from axons in neurons.</text>
</comment>
<comment type="similarity">
    <text evidence="5">Belongs to the PMP-22/EMP/MP20 family. CACNG subfamily.</text>
</comment>
<organism>
    <name type="scientific">Mus musculus</name>
    <name type="common">Mouse</name>
    <dbReference type="NCBI Taxonomy" id="10090"/>
    <lineage>
        <taxon>Eukaryota</taxon>
        <taxon>Metazoa</taxon>
        <taxon>Chordata</taxon>
        <taxon>Craniata</taxon>
        <taxon>Vertebrata</taxon>
        <taxon>Euteleostomi</taxon>
        <taxon>Mammalia</taxon>
        <taxon>Eutheria</taxon>
        <taxon>Euarchontoglires</taxon>
        <taxon>Glires</taxon>
        <taxon>Rodentia</taxon>
        <taxon>Myomorpha</taxon>
        <taxon>Muroidea</taxon>
        <taxon>Muridae</taxon>
        <taxon>Murinae</taxon>
        <taxon>Mus</taxon>
        <taxon>Mus</taxon>
    </lineage>
</organism>
<name>CCG3_MOUSE</name>
<sequence length="315" mass="35516">MRMCDRGIQMLITTVGAFAAFSLMTIAVGTDYWLYSRGVCRTKSTSDNETSRKNEEVMTHSGLWRTCCLEGAFRGVCKKIDHFPEDADYEQDTAEYLLRAVRASSVFPILSVTLLFFGGLCVAASEFHRSRHSVILSAGIFFVSAGLSNIIGIIVYISANAGDPGQRDSKKSYSYGWSFYFGAFSFIIAEIVGVVAVHIYIEKHQQLRARSHSELLKKSTFARLPPYRYRFRRRSSSRSTEPRSRDLSPISKGFHTIPSTDISMFTLSRDPSKLTMGTLLNSDRDHAFLQFHNSTPKEFKESLHNNPANRRTTPV</sequence>
<keyword id="KW-0106">Calcium</keyword>
<keyword id="KW-0107">Calcium channel</keyword>
<keyword id="KW-0109">Calcium transport</keyword>
<keyword id="KW-0407">Ion channel</keyword>
<keyword id="KW-0406">Ion transport</keyword>
<keyword id="KW-0472">Membrane</keyword>
<keyword id="KW-0597">Phosphoprotein</keyword>
<keyword id="KW-1185">Reference proteome</keyword>
<keyword id="KW-0812">Transmembrane</keyword>
<keyword id="KW-1133">Transmembrane helix</keyword>
<keyword id="KW-0813">Transport</keyword>
<keyword id="KW-0851">Voltage-gated channel</keyword>
<dbReference type="EMBL" id="AJ272044">
    <property type="protein sequence ID" value="CAB86385.1"/>
    <property type="molecule type" value="mRNA"/>
</dbReference>
<dbReference type="EMBL" id="CH466531">
    <property type="protein sequence ID" value="EDL17281.1"/>
    <property type="molecule type" value="Genomic_DNA"/>
</dbReference>
<dbReference type="EMBL" id="BC138673">
    <property type="protein sequence ID" value="AAI38674.1"/>
    <property type="molecule type" value="mRNA"/>
</dbReference>
<dbReference type="EMBL" id="BC145971">
    <property type="protein sequence ID" value="AAI45972.1"/>
    <property type="molecule type" value="mRNA"/>
</dbReference>
<dbReference type="CCDS" id="CCDS21816.1"/>
<dbReference type="RefSeq" id="NP_062303.2">
    <property type="nucleotide sequence ID" value="NM_019430.2"/>
</dbReference>
<dbReference type="SMR" id="Q9JJV5"/>
<dbReference type="BioGRID" id="207630">
    <property type="interactions" value="3"/>
</dbReference>
<dbReference type="FunCoup" id="Q9JJV5">
    <property type="interactions" value="401"/>
</dbReference>
<dbReference type="IntAct" id="Q9JJV5">
    <property type="interactions" value="1"/>
</dbReference>
<dbReference type="MINT" id="Q9JJV5"/>
<dbReference type="STRING" id="10090.ENSMUSP00000081664"/>
<dbReference type="GlyGen" id="Q9JJV5">
    <property type="glycosylation" value="2 sites, 1 O-linked glycan (2 sites)"/>
</dbReference>
<dbReference type="iPTMnet" id="Q9JJV5"/>
<dbReference type="PhosphoSitePlus" id="Q9JJV5"/>
<dbReference type="SwissPalm" id="Q9JJV5"/>
<dbReference type="PaxDb" id="10090-ENSMUSP00000081664"/>
<dbReference type="PeptideAtlas" id="Q9JJV5"/>
<dbReference type="ProteomicsDB" id="265607"/>
<dbReference type="Antibodypedia" id="26064">
    <property type="antibodies" value="235 antibodies from 27 providers"/>
</dbReference>
<dbReference type="DNASU" id="54376"/>
<dbReference type="Ensembl" id="ENSMUST00000084615.10">
    <property type="protein sequence ID" value="ENSMUSP00000081664.3"/>
    <property type="gene ID" value="ENSMUSG00000066189.10"/>
</dbReference>
<dbReference type="GeneID" id="54376"/>
<dbReference type="KEGG" id="mmu:54376"/>
<dbReference type="UCSC" id="uc009jov.3">
    <property type="organism name" value="mouse"/>
</dbReference>
<dbReference type="AGR" id="MGI:1859165"/>
<dbReference type="CTD" id="10368"/>
<dbReference type="MGI" id="MGI:1859165">
    <property type="gene designation" value="Cacng3"/>
</dbReference>
<dbReference type="VEuPathDB" id="HostDB:ENSMUSG00000066189"/>
<dbReference type="eggNOG" id="ENOG502QVF5">
    <property type="taxonomic scope" value="Eukaryota"/>
</dbReference>
<dbReference type="GeneTree" id="ENSGT01050000244893"/>
<dbReference type="HOGENOM" id="CLU_053704_0_1_1"/>
<dbReference type="InParanoid" id="Q9JJV5"/>
<dbReference type="OMA" id="YEQDTSE"/>
<dbReference type="OrthoDB" id="9990458at2759"/>
<dbReference type="PhylomeDB" id="Q9JJV5"/>
<dbReference type="TreeFam" id="TF327980"/>
<dbReference type="Reactome" id="R-MMU-399719">
    <property type="pathway name" value="Trafficking of AMPA receptors"/>
</dbReference>
<dbReference type="Reactome" id="R-MMU-5682910">
    <property type="pathway name" value="LGI-ADAM interactions"/>
</dbReference>
<dbReference type="BioGRID-ORCS" id="54376">
    <property type="hits" value="2 hits in 76 CRISPR screens"/>
</dbReference>
<dbReference type="CD-CODE" id="CE726F99">
    <property type="entry name" value="Postsynaptic density"/>
</dbReference>
<dbReference type="PRO" id="PR:Q9JJV5"/>
<dbReference type="Proteomes" id="UP000000589">
    <property type="component" value="Chromosome 7"/>
</dbReference>
<dbReference type="RNAct" id="Q9JJV5">
    <property type="molecule type" value="protein"/>
</dbReference>
<dbReference type="Bgee" id="ENSMUSG00000066189">
    <property type="expression patterns" value="Expressed in superior frontal gyrus and 57 other cell types or tissues"/>
</dbReference>
<dbReference type="ExpressionAtlas" id="Q9JJV5">
    <property type="expression patterns" value="baseline and differential"/>
</dbReference>
<dbReference type="GO" id="GO:0032281">
    <property type="term" value="C:AMPA glutamate receptor complex"/>
    <property type="evidence" value="ECO:0000314"/>
    <property type="project" value="MGI"/>
</dbReference>
<dbReference type="GO" id="GO:0030425">
    <property type="term" value="C:dendrite"/>
    <property type="evidence" value="ECO:0007669"/>
    <property type="project" value="Ensembl"/>
</dbReference>
<dbReference type="GO" id="GO:0060076">
    <property type="term" value="C:excitatory synapse"/>
    <property type="evidence" value="ECO:0007669"/>
    <property type="project" value="Ensembl"/>
</dbReference>
<dbReference type="GO" id="GO:0098978">
    <property type="term" value="C:glutamatergic synapse"/>
    <property type="evidence" value="ECO:0000314"/>
    <property type="project" value="SynGO"/>
</dbReference>
<dbReference type="GO" id="GO:0098839">
    <property type="term" value="C:postsynaptic density membrane"/>
    <property type="evidence" value="ECO:0000314"/>
    <property type="project" value="SynGO"/>
</dbReference>
<dbReference type="GO" id="GO:0098685">
    <property type="term" value="C:Schaffer collateral - CA1 synapse"/>
    <property type="evidence" value="ECO:0000314"/>
    <property type="project" value="SynGO"/>
</dbReference>
<dbReference type="GO" id="GO:0036477">
    <property type="term" value="C:somatodendritic compartment"/>
    <property type="evidence" value="ECO:0000314"/>
    <property type="project" value="UniProtKB"/>
</dbReference>
<dbReference type="GO" id="GO:0005262">
    <property type="term" value="F:calcium channel activity"/>
    <property type="evidence" value="ECO:0007669"/>
    <property type="project" value="UniProtKB-KW"/>
</dbReference>
<dbReference type="GO" id="GO:0035255">
    <property type="term" value="F:ionotropic glutamate receptor binding"/>
    <property type="evidence" value="ECO:0007669"/>
    <property type="project" value="Ensembl"/>
</dbReference>
<dbReference type="GO" id="GO:0030165">
    <property type="term" value="F:PDZ domain binding"/>
    <property type="evidence" value="ECO:0007669"/>
    <property type="project" value="Ensembl"/>
</dbReference>
<dbReference type="GO" id="GO:0099645">
    <property type="term" value="P:neurotransmitter receptor localization to postsynaptic specialization membrane"/>
    <property type="evidence" value="ECO:0000314"/>
    <property type="project" value="SynGO"/>
</dbReference>
<dbReference type="GO" id="GO:0008104">
    <property type="term" value="P:protein localization"/>
    <property type="evidence" value="ECO:0000315"/>
    <property type="project" value="UniProtKB"/>
</dbReference>
<dbReference type="GO" id="GO:0006605">
    <property type="term" value="P:protein targeting"/>
    <property type="evidence" value="ECO:0000315"/>
    <property type="project" value="UniProtKB"/>
</dbReference>
<dbReference type="GO" id="GO:2000311">
    <property type="term" value="P:regulation of AMPA receptor activity"/>
    <property type="evidence" value="ECO:0000250"/>
    <property type="project" value="UniProtKB"/>
</dbReference>
<dbReference type="FunFam" id="1.20.140.150:FF:000002">
    <property type="entry name" value="Voltage-dependent calcium channel gamma-2 subunit"/>
    <property type="match status" value="1"/>
</dbReference>
<dbReference type="Gene3D" id="1.20.140.150">
    <property type="match status" value="1"/>
</dbReference>
<dbReference type="InterPro" id="IPR051072">
    <property type="entry name" value="CACNG_subunit"/>
</dbReference>
<dbReference type="InterPro" id="IPR004031">
    <property type="entry name" value="PMP22/EMP/MP20/Claudin"/>
</dbReference>
<dbReference type="InterPro" id="IPR008368">
    <property type="entry name" value="VDCC_gsu"/>
</dbReference>
<dbReference type="PANTHER" id="PTHR12107">
    <property type="entry name" value="VOLTAGE-DEPENDENT CALCIUM CHANNEL GAMMA SUBUNIT"/>
    <property type="match status" value="1"/>
</dbReference>
<dbReference type="PANTHER" id="PTHR12107:SF5">
    <property type="entry name" value="VOLTAGE-DEPENDENT CALCIUM CHANNEL GAMMA-3 SUBUNIT"/>
    <property type="match status" value="1"/>
</dbReference>
<dbReference type="Pfam" id="PF00822">
    <property type="entry name" value="PMP22_Claudin"/>
    <property type="match status" value="1"/>
</dbReference>
<dbReference type="PRINTS" id="PR01792">
    <property type="entry name" value="VDCCGAMMA"/>
</dbReference>
<reference key="1">
    <citation type="journal article" date="2000" name="FEBS Lett.">
        <title>A family of gamma-like calcium channel subunits.</title>
        <authorList>
            <person name="Klugbauer N."/>
            <person name="Dai S."/>
            <person name="Specht V."/>
            <person name="Lacinova L."/>
            <person name="Marais E."/>
            <person name="Bohn G."/>
            <person name="Hofmann F."/>
        </authorList>
    </citation>
    <scope>NUCLEOTIDE SEQUENCE [MRNA]</scope>
    <source>
        <tissue>Brain</tissue>
    </source>
</reference>
<reference key="2">
    <citation type="submission" date="2005-07" db="EMBL/GenBank/DDBJ databases">
        <authorList>
            <person name="Mural R.J."/>
            <person name="Adams M.D."/>
            <person name="Myers E.W."/>
            <person name="Smith H.O."/>
            <person name="Venter J.C."/>
        </authorList>
    </citation>
    <scope>NUCLEOTIDE SEQUENCE [LARGE SCALE GENOMIC DNA]</scope>
</reference>
<reference key="3">
    <citation type="journal article" date="2004" name="Genome Res.">
        <title>The status, quality, and expansion of the NIH full-length cDNA project: the Mammalian Gene Collection (MGC).</title>
        <authorList>
            <consortium name="The MGC Project Team"/>
        </authorList>
    </citation>
    <scope>NUCLEOTIDE SEQUENCE [LARGE SCALE MRNA]</scope>
    <source>
        <tissue>Brain</tissue>
    </source>
</reference>
<reference key="4">
    <citation type="journal article" date="2008" name="Neuron">
        <title>Accumulation of AMPA receptors in autophagosomes in neuronal axons lacking adaptor protein AP-4.</title>
        <authorList>
            <person name="Matsuda S."/>
            <person name="Miura E."/>
            <person name="Matsuda K."/>
            <person name="Kakegawa W."/>
            <person name="Kohda K."/>
            <person name="Watanabe M."/>
            <person name="Yuzaki M."/>
        </authorList>
    </citation>
    <scope>FUNCTION</scope>
    <scope>INTERACTION WITH AP4M1 AND GRIA1</scope>
    <scope>SUBCELLULAR LOCATION</scope>
    <scope>MUTAGENESIS OF 227-TYR--THR-240</scope>
</reference>